<organism>
    <name type="scientific">Burkholderia pseudomallei (strain 1106a)</name>
    <dbReference type="NCBI Taxonomy" id="357348"/>
    <lineage>
        <taxon>Bacteria</taxon>
        <taxon>Pseudomonadati</taxon>
        <taxon>Pseudomonadota</taxon>
        <taxon>Betaproteobacteria</taxon>
        <taxon>Burkholderiales</taxon>
        <taxon>Burkholderiaceae</taxon>
        <taxon>Burkholderia</taxon>
        <taxon>pseudomallei group</taxon>
    </lineage>
</organism>
<sequence>MLDIQLLRKDLDGVAKRLADRGYPLDVAAFSALEAERRAIQTRTEELQARRNSLSKQIGAMKGRGEDTSAVMAEVGGIGDEMKASAVKLDEIQARLSELMLEMPNVPHESVPVGRDETENVEVRRWGAPRQFDFDVKDHVDVGTPLGLDFETGAKLSGARFTVLRGPIARLHRALAQFMLDTHTQQHGYSETYTPYIVNPDVLYGTGQLPKFAEDMFRVEKGGAENTVTQYLISTSEISLTNTVRDSIVEASALPIKLTAHSPCFRSEAGSYGRDTRGMIRQHQFDKVEMVQIVAPEASYAALDEMVGHAEAILQKLELPYRVVALCTGDMGFSAAKTFDLEVWLPAQNTYREISSCSNTESFQARRMQARFRNAQGKPELVHTLNGSGLAVGRTLVAVLENYQNADGSVTVPVALRPYMGGVERIDAPSSAA</sequence>
<gene>
    <name evidence="1" type="primary">serS</name>
    <name type="ordered locus">BURPS1106A_3038</name>
</gene>
<evidence type="ECO:0000255" key="1">
    <source>
        <dbReference type="HAMAP-Rule" id="MF_00176"/>
    </source>
</evidence>
<comment type="function">
    <text evidence="1">Catalyzes the attachment of serine to tRNA(Ser). Is also able to aminoacylate tRNA(Sec) with serine, to form the misacylated tRNA L-seryl-tRNA(Sec), which will be further converted into selenocysteinyl-tRNA(Sec).</text>
</comment>
<comment type="catalytic activity">
    <reaction evidence="1">
        <text>tRNA(Ser) + L-serine + ATP = L-seryl-tRNA(Ser) + AMP + diphosphate + H(+)</text>
        <dbReference type="Rhea" id="RHEA:12292"/>
        <dbReference type="Rhea" id="RHEA-COMP:9669"/>
        <dbReference type="Rhea" id="RHEA-COMP:9703"/>
        <dbReference type="ChEBI" id="CHEBI:15378"/>
        <dbReference type="ChEBI" id="CHEBI:30616"/>
        <dbReference type="ChEBI" id="CHEBI:33019"/>
        <dbReference type="ChEBI" id="CHEBI:33384"/>
        <dbReference type="ChEBI" id="CHEBI:78442"/>
        <dbReference type="ChEBI" id="CHEBI:78533"/>
        <dbReference type="ChEBI" id="CHEBI:456215"/>
        <dbReference type="EC" id="6.1.1.11"/>
    </reaction>
</comment>
<comment type="catalytic activity">
    <reaction evidence="1">
        <text>tRNA(Sec) + L-serine + ATP = L-seryl-tRNA(Sec) + AMP + diphosphate + H(+)</text>
        <dbReference type="Rhea" id="RHEA:42580"/>
        <dbReference type="Rhea" id="RHEA-COMP:9742"/>
        <dbReference type="Rhea" id="RHEA-COMP:10128"/>
        <dbReference type="ChEBI" id="CHEBI:15378"/>
        <dbReference type="ChEBI" id="CHEBI:30616"/>
        <dbReference type="ChEBI" id="CHEBI:33019"/>
        <dbReference type="ChEBI" id="CHEBI:33384"/>
        <dbReference type="ChEBI" id="CHEBI:78442"/>
        <dbReference type="ChEBI" id="CHEBI:78533"/>
        <dbReference type="ChEBI" id="CHEBI:456215"/>
        <dbReference type="EC" id="6.1.1.11"/>
    </reaction>
</comment>
<comment type="pathway">
    <text evidence="1">Aminoacyl-tRNA biosynthesis; selenocysteinyl-tRNA(Sec) biosynthesis; L-seryl-tRNA(Sec) from L-serine and tRNA(Sec): step 1/1.</text>
</comment>
<comment type="subunit">
    <text evidence="1">Homodimer. The tRNA molecule binds across the dimer.</text>
</comment>
<comment type="subcellular location">
    <subcellularLocation>
        <location evidence="1">Cytoplasm</location>
    </subcellularLocation>
</comment>
<comment type="domain">
    <text evidence="1">Consists of two distinct domains, a catalytic core and a N-terminal extension that is involved in tRNA binding.</text>
</comment>
<comment type="similarity">
    <text evidence="1">Belongs to the class-II aminoacyl-tRNA synthetase family. Type-1 seryl-tRNA synthetase subfamily.</text>
</comment>
<dbReference type="EC" id="6.1.1.11" evidence="1"/>
<dbReference type="EMBL" id="CP000572">
    <property type="protein sequence ID" value="ABN91940.1"/>
    <property type="molecule type" value="Genomic_DNA"/>
</dbReference>
<dbReference type="RefSeq" id="WP_004186129.1">
    <property type="nucleotide sequence ID" value="NC_009076.1"/>
</dbReference>
<dbReference type="SMR" id="A3NY56"/>
<dbReference type="GeneID" id="93061177"/>
<dbReference type="KEGG" id="bpl:BURPS1106A_3038"/>
<dbReference type="HOGENOM" id="CLU_023797_1_1_4"/>
<dbReference type="UniPathway" id="UPA00906">
    <property type="reaction ID" value="UER00895"/>
</dbReference>
<dbReference type="Proteomes" id="UP000006738">
    <property type="component" value="Chromosome I"/>
</dbReference>
<dbReference type="GO" id="GO:0005737">
    <property type="term" value="C:cytoplasm"/>
    <property type="evidence" value="ECO:0007669"/>
    <property type="project" value="UniProtKB-SubCell"/>
</dbReference>
<dbReference type="GO" id="GO:0005524">
    <property type="term" value="F:ATP binding"/>
    <property type="evidence" value="ECO:0007669"/>
    <property type="project" value="UniProtKB-UniRule"/>
</dbReference>
<dbReference type="GO" id="GO:0004828">
    <property type="term" value="F:serine-tRNA ligase activity"/>
    <property type="evidence" value="ECO:0007669"/>
    <property type="project" value="UniProtKB-UniRule"/>
</dbReference>
<dbReference type="GO" id="GO:0016260">
    <property type="term" value="P:selenocysteine biosynthetic process"/>
    <property type="evidence" value="ECO:0007669"/>
    <property type="project" value="UniProtKB-UniRule"/>
</dbReference>
<dbReference type="GO" id="GO:0006434">
    <property type="term" value="P:seryl-tRNA aminoacylation"/>
    <property type="evidence" value="ECO:0007669"/>
    <property type="project" value="UniProtKB-UniRule"/>
</dbReference>
<dbReference type="CDD" id="cd00770">
    <property type="entry name" value="SerRS_core"/>
    <property type="match status" value="1"/>
</dbReference>
<dbReference type="Gene3D" id="3.30.930.10">
    <property type="entry name" value="Bira Bifunctional Protein, Domain 2"/>
    <property type="match status" value="1"/>
</dbReference>
<dbReference type="Gene3D" id="1.10.287.40">
    <property type="entry name" value="Serine-tRNA synthetase, tRNA binding domain"/>
    <property type="match status" value="1"/>
</dbReference>
<dbReference type="HAMAP" id="MF_00176">
    <property type="entry name" value="Ser_tRNA_synth_type1"/>
    <property type="match status" value="1"/>
</dbReference>
<dbReference type="InterPro" id="IPR002314">
    <property type="entry name" value="aa-tRNA-synt_IIb"/>
</dbReference>
<dbReference type="InterPro" id="IPR006195">
    <property type="entry name" value="aa-tRNA-synth_II"/>
</dbReference>
<dbReference type="InterPro" id="IPR045864">
    <property type="entry name" value="aa-tRNA-synth_II/BPL/LPL"/>
</dbReference>
<dbReference type="InterPro" id="IPR002317">
    <property type="entry name" value="Ser-tRNA-ligase_type_1"/>
</dbReference>
<dbReference type="InterPro" id="IPR015866">
    <property type="entry name" value="Ser-tRNA-synth_1_N"/>
</dbReference>
<dbReference type="InterPro" id="IPR042103">
    <property type="entry name" value="SerRS_1_N_sf"/>
</dbReference>
<dbReference type="InterPro" id="IPR033729">
    <property type="entry name" value="SerRS_core"/>
</dbReference>
<dbReference type="InterPro" id="IPR010978">
    <property type="entry name" value="tRNA-bd_arm"/>
</dbReference>
<dbReference type="NCBIfam" id="TIGR00414">
    <property type="entry name" value="serS"/>
    <property type="match status" value="1"/>
</dbReference>
<dbReference type="PANTHER" id="PTHR43697:SF1">
    <property type="entry name" value="SERINE--TRNA LIGASE"/>
    <property type="match status" value="1"/>
</dbReference>
<dbReference type="PANTHER" id="PTHR43697">
    <property type="entry name" value="SERYL-TRNA SYNTHETASE"/>
    <property type="match status" value="1"/>
</dbReference>
<dbReference type="Pfam" id="PF02403">
    <property type="entry name" value="Seryl_tRNA_N"/>
    <property type="match status" value="1"/>
</dbReference>
<dbReference type="Pfam" id="PF00587">
    <property type="entry name" value="tRNA-synt_2b"/>
    <property type="match status" value="1"/>
</dbReference>
<dbReference type="PIRSF" id="PIRSF001529">
    <property type="entry name" value="Ser-tRNA-synth_IIa"/>
    <property type="match status" value="1"/>
</dbReference>
<dbReference type="PRINTS" id="PR00981">
    <property type="entry name" value="TRNASYNTHSER"/>
</dbReference>
<dbReference type="SUPFAM" id="SSF55681">
    <property type="entry name" value="Class II aaRS and biotin synthetases"/>
    <property type="match status" value="1"/>
</dbReference>
<dbReference type="SUPFAM" id="SSF46589">
    <property type="entry name" value="tRNA-binding arm"/>
    <property type="match status" value="1"/>
</dbReference>
<dbReference type="PROSITE" id="PS50862">
    <property type="entry name" value="AA_TRNA_LIGASE_II"/>
    <property type="match status" value="1"/>
</dbReference>
<protein>
    <recommendedName>
        <fullName evidence="1">Serine--tRNA ligase</fullName>
        <ecNumber evidence="1">6.1.1.11</ecNumber>
    </recommendedName>
    <alternativeName>
        <fullName evidence="1">Seryl-tRNA synthetase</fullName>
        <shortName evidence="1">SerRS</shortName>
    </alternativeName>
    <alternativeName>
        <fullName evidence="1">Seryl-tRNA(Ser/Sec) synthetase</fullName>
    </alternativeName>
</protein>
<proteinExistence type="inferred from homology"/>
<keyword id="KW-0030">Aminoacyl-tRNA synthetase</keyword>
<keyword id="KW-0067">ATP-binding</keyword>
<keyword id="KW-0963">Cytoplasm</keyword>
<keyword id="KW-0436">Ligase</keyword>
<keyword id="KW-0547">Nucleotide-binding</keyword>
<keyword id="KW-0648">Protein biosynthesis</keyword>
<reference key="1">
    <citation type="journal article" date="2010" name="Genome Biol. Evol.">
        <title>Continuing evolution of Burkholderia mallei through genome reduction and large-scale rearrangements.</title>
        <authorList>
            <person name="Losada L."/>
            <person name="Ronning C.M."/>
            <person name="DeShazer D."/>
            <person name="Woods D."/>
            <person name="Fedorova N."/>
            <person name="Kim H.S."/>
            <person name="Shabalina S.A."/>
            <person name="Pearson T.R."/>
            <person name="Brinkac L."/>
            <person name="Tan P."/>
            <person name="Nandi T."/>
            <person name="Crabtree J."/>
            <person name="Badger J."/>
            <person name="Beckstrom-Sternberg S."/>
            <person name="Saqib M."/>
            <person name="Schutzer S.E."/>
            <person name="Keim P."/>
            <person name="Nierman W.C."/>
        </authorList>
    </citation>
    <scope>NUCLEOTIDE SEQUENCE [LARGE SCALE GENOMIC DNA]</scope>
    <source>
        <strain>1106a</strain>
    </source>
</reference>
<accession>A3NY56</accession>
<feature type="chain" id="PRO_1000019632" description="Serine--tRNA ligase">
    <location>
        <begin position="1"/>
        <end position="433"/>
    </location>
</feature>
<feature type="binding site" evidence="1">
    <location>
        <begin position="235"/>
        <end position="237"/>
    </location>
    <ligand>
        <name>L-serine</name>
        <dbReference type="ChEBI" id="CHEBI:33384"/>
    </ligand>
</feature>
<feature type="binding site" evidence="1">
    <location>
        <begin position="266"/>
        <end position="268"/>
    </location>
    <ligand>
        <name>ATP</name>
        <dbReference type="ChEBI" id="CHEBI:30616"/>
    </ligand>
</feature>
<feature type="binding site" evidence="1">
    <location>
        <position position="289"/>
    </location>
    <ligand>
        <name>L-serine</name>
        <dbReference type="ChEBI" id="CHEBI:33384"/>
    </ligand>
</feature>
<feature type="binding site" evidence="1">
    <location>
        <begin position="353"/>
        <end position="356"/>
    </location>
    <ligand>
        <name>ATP</name>
        <dbReference type="ChEBI" id="CHEBI:30616"/>
    </ligand>
</feature>
<feature type="binding site" evidence="1">
    <location>
        <position position="388"/>
    </location>
    <ligand>
        <name>L-serine</name>
        <dbReference type="ChEBI" id="CHEBI:33384"/>
    </ligand>
</feature>
<name>SYS_BURP0</name>